<reference key="1">
    <citation type="journal article" date="2009" name="J. Bacteriol.">
        <title>Genome sequence of Azotobacter vinelandii, an obligate aerobe specialized to support diverse anaerobic metabolic processes.</title>
        <authorList>
            <person name="Setubal J.C."/>
            <person name="Dos Santos P."/>
            <person name="Goldman B.S."/>
            <person name="Ertesvaag H."/>
            <person name="Espin G."/>
            <person name="Rubio L.M."/>
            <person name="Valla S."/>
            <person name="Almeida N.F."/>
            <person name="Balasubramanian D."/>
            <person name="Cromes L."/>
            <person name="Curatti L."/>
            <person name="Du Z."/>
            <person name="Godsy E."/>
            <person name="Goodner B."/>
            <person name="Hellner-Burris K."/>
            <person name="Hernandez J.A."/>
            <person name="Houmiel K."/>
            <person name="Imperial J."/>
            <person name="Kennedy C."/>
            <person name="Larson T.J."/>
            <person name="Latreille P."/>
            <person name="Ligon L.S."/>
            <person name="Lu J."/>
            <person name="Maerk M."/>
            <person name="Miller N.M."/>
            <person name="Norton S."/>
            <person name="O'Carroll I.P."/>
            <person name="Paulsen I."/>
            <person name="Raulfs E.C."/>
            <person name="Roemer R."/>
            <person name="Rosser J."/>
            <person name="Segura D."/>
            <person name="Slater S."/>
            <person name="Stricklin S.L."/>
            <person name="Studholme D.J."/>
            <person name="Sun J."/>
            <person name="Viana C.J."/>
            <person name="Wallin E."/>
            <person name="Wang B."/>
            <person name="Wheeler C."/>
            <person name="Zhu H."/>
            <person name="Dean D.R."/>
            <person name="Dixon R."/>
            <person name="Wood D."/>
        </authorList>
    </citation>
    <scope>NUCLEOTIDE SEQUENCE [LARGE SCALE GENOMIC DNA]</scope>
    <source>
        <strain>DJ / ATCC BAA-1303</strain>
    </source>
</reference>
<name>SYH_AZOVD</name>
<feature type="chain" id="PRO_1000203126" description="Histidine--tRNA ligase">
    <location>
        <begin position="1"/>
        <end position="428"/>
    </location>
</feature>
<sequence>MSKNIQAIRGMNDILPEQTPLWRYFEKSVAGLLDGYGYRQIRMPIVEFTELFKRSIGEVTDIVEKEMYTFEDRNGDSLTLRPEGTASCVRAVLEHGISGGGQVQKLWYVGPMFRHERPQKGRYRQFHQIGVEVFNLPGPDIDAELIVLTWRLWGLLGLREAVTLELNSLGSSEARARYREALVEYLSARFERLDEDSQRRLSSNPLRILDSKNPETQALLVDAPKLADYLDEDSRQHFEGLKARLDVAGIPYVINPKLVRGLDYYGKTVFEWVTDKLGAQGTVCAGGRYDGLVEQLGGKPTPAVGFAMGVERLVLLLETLERVPAELSRQVDVYFCAFGEAAELAALGLAERLRDALPGLRLAVNAGAGSFKSQLKKADKSGALYALVLGEDELAGRIVGLKSLRAEGEQQSVGWDELGERLAACLRA</sequence>
<dbReference type="EC" id="6.1.1.21" evidence="1"/>
<dbReference type="EMBL" id="CP001157">
    <property type="protein sequence ID" value="ACO80164.1"/>
    <property type="molecule type" value="Genomic_DNA"/>
</dbReference>
<dbReference type="RefSeq" id="WP_012702539.1">
    <property type="nucleotide sequence ID" value="NC_012560.1"/>
</dbReference>
<dbReference type="SMR" id="C1DE56"/>
<dbReference type="STRING" id="322710.Avin_40280"/>
<dbReference type="EnsemblBacteria" id="ACO80164">
    <property type="protein sequence ID" value="ACO80164"/>
    <property type="gene ID" value="Avin_40280"/>
</dbReference>
<dbReference type="GeneID" id="88186971"/>
<dbReference type="KEGG" id="avn:Avin_40280"/>
<dbReference type="eggNOG" id="COG0124">
    <property type="taxonomic scope" value="Bacteria"/>
</dbReference>
<dbReference type="HOGENOM" id="CLU_025113_1_1_6"/>
<dbReference type="OrthoDB" id="9800814at2"/>
<dbReference type="Proteomes" id="UP000002424">
    <property type="component" value="Chromosome"/>
</dbReference>
<dbReference type="GO" id="GO:0005737">
    <property type="term" value="C:cytoplasm"/>
    <property type="evidence" value="ECO:0007669"/>
    <property type="project" value="UniProtKB-SubCell"/>
</dbReference>
<dbReference type="GO" id="GO:0005524">
    <property type="term" value="F:ATP binding"/>
    <property type="evidence" value="ECO:0007669"/>
    <property type="project" value="UniProtKB-UniRule"/>
</dbReference>
<dbReference type="GO" id="GO:0004821">
    <property type="term" value="F:histidine-tRNA ligase activity"/>
    <property type="evidence" value="ECO:0007669"/>
    <property type="project" value="UniProtKB-UniRule"/>
</dbReference>
<dbReference type="GO" id="GO:0006427">
    <property type="term" value="P:histidyl-tRNA aminoacylation"/>
    <property type="evidence" value="ECO:0007669"/>
    <property type="project" value="UniProtKB-UniRule"/>
</dbReference>
<dbReference type="CDD" id="cd00773">
    <property type="entry name" value="HisRS-like_core"/>
    <property type="match status" value="1"/>
</dbReference>
<dbReference type="FunFam" id="3.30.930.10:FF:000005">
    <property type="entry name" value="Histidine--tRNA ligase"/>
    <property type="match status" value="1"/>
</dbReference>
<dbReference type="Gene3D" id="3.40.50.800">
    <property type="entry name" value="Anticodon-binding domain"/>
    <property type="match status" value="1"/>
</dbReference>
<dbReference type="Gene3D" id="3.30.930.10">
    <property type="entry name" value="Bira Bifunctional Protein, Domain 2"/>
    <property type="match status" value="1"/>
</dbReference>
<dbReference type="HAMAP" id="MF_00127">
    <property type="entry name" value="His_tRNA_synth"/>
    <property type="match status" value="1"/>
</dbReference>
<dbReference type="InterPro" id="IPR006195">
    <property type="entry name" value="aa-tRNA-synth_II"/>
</dbReference>
<dbReference type="InterPro" id="IPR045864">
    <property type="entry name" value="aa-tRNA-synth_II/BPL/LPL"/>
</dbReference>
<dbReference type="InterPro" id="IPR004154">
    <property type="entry name" value="Anticodon-bd"/>
</dbReference>
<dbReference type="InterPro" id="IPR036621">
    <property type="entry name" value="Anticodon-bd_dom_sf"/>
</dbReference>
<dbReference type="InterPro" id="IPR015807">
    <property type="entry name" value="His-tRNA-ligase"/>
</dbReference>
<dbReference type="InterPro" id="IPR041715">
    <property type="entry name" value="HisRS-like_core"/>
</dbReference>
<dbReference type="InterPro" id="IPR004516">
    <property type="entry name" value="HisRS/HisZ"/>
</dbReference>
<dbReference type="NCBIfam" id="TIGR00442">
    <property type="entry name" value="hisS"/>
    <property type="match status" value="1"/>
</dbReference>
<dbReference type="PANTHER" id="PTHR43707:SF1">
    <property type="entry name" value="HISTIDINE--TRNA LIGASE, MITOCHONDRIAL-RELATED"/>
    <property type="match status" value="1"/>
</dbReference>
<dbReference type="PANTHER" id="PTHR43707">
    <property type="entry name" value="HISTIDYL-TRNA SYNTHETASE"/>
    <property type="match status" value="1"/>
</dbReference>
<dbReference type="Pfam" id="PF03129">
    <property type="entry name" value="HGTP_anticodon"/>
    <property type="match status" value="1"/>
</dbReference>
<dbReference type="Pfam" id="PF13393">
    <property type="entry name" value="tRNA-synt_His"/>
    <property type="match status" value="1"/>
</dbReference>
<dbReference type="PIRSF" id="PIRSF001549">
    <property type="entry name" value="His-tRNA_synth"/>
    <property type="match status" value="1"/>
</dbReference>
<dbReference type="SUPFAM" id="SSF52954">
    <property type="entry name" value="Class II aaRS ABD-related"/>
    <property type="match status" value="1"/>
</dbReference>
<dbReference type="SUPFAM" id="SSF55681">
    <property type="entry name" value="Class II aaRS and biotin synthetases"/>
    <property type="match status" value="1"/>
</dbReference>
<dbReference type="PROSITE" id="PS50862">
    <property type="entry name" value="AA_TRNA_LIGASE_II"/>
    <property type="match status" value="1"/>
</dbReference>
<evidence type="ECO:0000255" key="1">
    <source>
        <dbReference type="HAMAP-Rule" id="MF_00127"/>
    </source>
</evidence>
<organism>
    <name type="scientific">Azotobacter vinelandii (strain DJ / ATCC BAA-1303)</name>
    <dbReference type="NCBI Taxonomy" id="322710"/>
    <lineage>
        <taxon>Bacteria</taxon>
        <taxon>Pseudomonadati</taxon>
        <taxon>Pseudomonadota</taxon>
        <taxon>Gammaproteobacteria</taxon>
        <taxon>Pseudomonadales</taxon>
        <taxon>Pseudomonadaceae</taxon>
        <taxon>Azotobacter</taxon>
    </lineage>
</organism>
<protein>
    <recommendedName>
        <fullName evidence="1">Histidine--tRNA ligase</fullName>
        <ecNumber evidence="1">6.1.1.21</ecNumber>
    </recommendedName>
    <alternativeName>
        <fullName evidence="1">Histidyl-tRNA synthetase</fullName>
        <shortName evidence="1">HisRS</shortName>
    </alternativeName>
</protein>
<keyword id="KW-0030">Aminoacyl-tRNA synthetase</keyword>
<keyword id="KW-0067">ATP-binding</keyword>
<keyword id="KW-0963">Cytoplasm</keyword>
<keyword id="KW-0436">Ligase</keyword>
<keyword id="KW-0547">Nucleotide-binding</keyword>
<keyword id="KW-0648">Protein biosynthesis</keyword>
<comment type="catalytic activity">
    <reaction evidence="1">
        <text>tRNA(His) + L-histidine + ATP = L-histidyl-tRNA(His) + AMP + diphosphate + H(+)</text>
        <dbReference type="Rhea" id="RHEA:17313"/>
        <dbReference type="Rhea" id="RHEA-COMP:9665"/>
        <dbReference type="Rhea" id="RHEA-COMP:9689"/>
        <dbReference type="ChEBI" id="CHEBI:15378"/>
        <dbReference type="ChEBI" id="CHEBI:30616"/>
        <dbReference type="ChEBI" id="CHEBI:33019"/>
        <dbReference type="ChEBI" id="CHEBI:57595"/>
        <dbReference type="ChEBI" id="CHEBI:78442"/>
        <dbReference type="ChEBI" id="CHEBI:78527"/>
        <dbReference type="ChEBI" id="CHEBI:456215"/>
        <dbReference type="EC" id="6.1.1.21"/>
    </reaction>
</comment>
<comment type="subunit">
    <text evidence="1">Homodimer.</text>
</comment>
<comment type="subcellular location">
    <subcellularLocation>
        <location evidence="1">Cytoplasm</location>
    </subcellularLocation>
</comment>
<comment type="similarity">
    <text evidence="1">Belongs to the class-II aminoacyl-tRNA synthetase family.</text>
</comment>
<gene>
    <name evidence="1" type="primary">hisS</name>
    <name type="ordered locus">Avin_40280</name>
</gene>
<proteinExistence type="inferred from homology"/>
<accession>C1DE56</accession>